<organism>
    <name type="scientific">Listeria monocytogenes serovar 1/2a (strain ATCC BAA-679 / EGD-e)</name>
    <dbReference type="NCBI Taxonomy" id="169963"/>
    <lineage>
        <taxon>Bacteria</taxon>
        <taxon>Bacillati</taxon>
        <taxon>Bacillota</taxon>
        <taxon>Bacilli</taxon>
        <taxon>Bacillales</taxon>
        <taxon>Listeriaceae</taxon>
        <taxon>Listeria</taxon>
    </lineage>
</organism>
<name>DAAA_LISMO</name>
<feature type="chain" id="PRO_0000103252" description="D-alanine aminotransferase">
    <location>
        <begin position="1"/>
        <end position="289"/>
    </location>
</feature>
<feature type="binding site" evidence="2">
    <location>
        <position position="31"/>
    </location>
    <ligand>
        <name>substrate</name>
    </ligand>
</feature>
<feature type="binding site" evidence="2">
    <location>
        <position position="50"/>
    </location>
    <ligand>
        <name>pyridoxal 5'-phosphate</name>
        <dbReference type="ChEBI" id="CHEBI:597326"/>
    </ligand>
</feature>
<feature type="binding site" evidence="2">
    <location>
        <position position="99"/>
    </location>
    <ligand>
        <name>substrate</name>
    </ligand>
</feature>
<feature type="binding site" evidence="2">
    <location>
        <position position="101"/>
    </location>
    <ligand>
        <name>substrate</name>
    </ligand>
</feature>
<feature type="binding site" evidence="2">
    <location>
        <position position="179"/>
    </location>
    <ligand>
        <name>pyridoxal 5'-phosphate</name>
        <dbReference type="ChEBI" id="CHEBI:597326"/>
    </ligand>
</feature>
<feature type="modified residue" description="N6-(pyridoxal phosphate)lysine" evidence="2">
    <location>
        <position position="147"/>
    </location>
</feature>
<keyword id="KW-0032">Aminotransferase</keyword>
<keyword id="KW-0663">Pyridoxal phosphate</keyword>
<keyword id="KW-1185">Reference proteome</keyword>
<keyword id="KW-0808">Transferase</keyword>
<gene>
    <name type="primary">dat</name>
    <name type="synonym">daaA</name>
    <name type="ordered locus">lmo1619</name>
</gene>
<sequence length="289" mass="32403">MKVLVNNHLVEREDATVDIEDRGYQFGDGVYEVVRLYNGKFFTYNEHIDRLYASAAKIDLVIPYSKEELRELLEKLVAENNINTGNVYLQVTRGVQNPRNHVIPDDFPLEGVLTAAAREVPRNERQFVEGGTAITEEDVRWLRCDIKSLNLLGNILAKNKAHQQNALEAILHRGEQVTECSASNVSIIKDGVLWTHAADNLILNGITRQVIIDVAKKNGIPVKEADFTLTDLREADEVFISSTTIEITPITHIDGVQVADGKRGPITAQLHQYFVEEITRACGELVFAK</sequence>
<evidence type="ECO:0000250" key="1"/>
<evidence type="ECO:0000250" key="2">
    <source>
        <dbReference type="UniProtKB" id="P19938"/>
    </source>
</evidence>
<evidence type="ECO:0000305" key="3"/>
<dbReference type="EC" id="2.6.1.21"/>
<dbReference type="EMBL" id="AL591980">
    <property type="protein sequence ID" value="CAC99697.1"/>
    <property type="molecule type" value="Genomic_DNA"/>
</dbReference>
<dbReference type="PIR" id="AC1277">
    <property type="entry name" value="AC1277"/>
</dbReference>
<dbReference type="RefSeq" id="NP_465144.1">
    <property type="nucleotide sequence ID" value="NC_003210.1"/>
</dbReference>
<dbReference type="RefSeq" id="WP_009931211.1">
    <property type="nucleotide sequence ID" value="NZ_CP149495.1"/>
</dbReference>
<dbReference type="SMR" id="P0DJL9"/>
<dbReference type="STRING" id="169963.gene:17594276"/>
<dbReference type="PaxDb" id="169963-lmo1619"/>
<dbReference type="EnsemblBacteria" id="CAC99697">
    <property type="protein sequence ID" value="CAC99697"/>
    <property type="gene ID" value="CAC99697"/>
</dbReference>
<dbReference type="GeneID" id="985722"/>
<dbReference type="KEGG" id="lmo:lmo1619"/>
<dbReference type="PATRIC" id="fig|169963.11.peg.1662"/>
<dbReference type="eggNOG" id="COG0115">
    <property type="taxonomic scope" value="Bacteria"/>
</dbReference>
<dbReference type="HOGENOM" id="CLU_020844_4_1_9"/>
<dbReference type="OrthoDB" id="9805628at2"/>
<dbReference type="PhylomeDB" id="P0DJL9"/>
<dbReference type="BioCyc" id="LMON169963:LMO1619-MONOMER"/>
<dbReference type="Proteomes" id="UP000000817">
    <property type="component" value="Chromosome"/>
</dbReference>
<dbReference type="GO" id="GO:0005829">
    <property type="term" value="C:cytosol"/>
    <property type="evidence" value="ECO:0000318"/>
    <property type="project" value="GO_Central"/>
</dbReference>
<dbReference type="GO" id="GO:0047810">
    <property type="term" value="F:D-alanine-2-oxoglutarate aminotransferase activity"/>
    <property type="evidence" value="ECO:0000250"/>
    <property type="project" value="UniProtKB"/>
</dbReference>
<dbReference type="GO" id="GO:0030170">
    <property type="term" value="F:pyridoxal phosphate binding"/>
    <property type="evidence" value="ECO:0000250"/>
    <property type="project" value="UniProtKB"/>
</dbReference>
<dbReference type="GO" id="GO:0019752">
    <property type="term" value="P:carboxylic acid metabolic process"/>
    <property type="evidence" value="ECO:0000318"/>
    <property type="project" value="GO_Central"/>
</dbReference>
<dbReference type="GO" id="GO:0046437">
    <property type="term" value="P:D-amino acid biosynthetic process"/>
    <property type="evidence" value="ECO:0000250"/>
    <property type="project" value="UniProtKB"/>
</dbReference>
<dbReference type="GO" id="GO:0019478">
    <property type="term" value="P:D-amino acid catabolic process"/>
    <property type="evidence" value="ECO:0000250"/>
    <property type="project" value="UniProtKB"/>
</dbReference>
<dbReference type="CDD" id="cd01558">
    <property type="entry name" value="D-AAT_like"/>
    <property type="match status" value="1"/>
</dbReference>
<dbReference type="FunFam" id="3.20.10.10:FF:000002">
    <property type="entry name" value="D-alanine aminotransferase"/>
    <property type="match status" value="1"/>
</dbReference>
<dbReference type="FunFam" id="3.30.470.10:FF:000009">
    <property type="entry name" value="D-alanine aminotransferase"/>
    <property type="match status" value="1"/>
</dbReference>
<dbReference type="Gene3D" id="3.30.470.10">
    <property type="match status" value="1"/>
</dbReference>
<dbReference type="Gene3D" id="3.20.10.10">
    <property type="entry name" value="D-amino Acid Aminotransferase, subunit A, domain 2"/>
    <property type="match status" value="1"/>
</dbReference>
<dbReference type="InterPro" id="IPR001544">
    <property type="entry name" value="Aminotrans_IV"/>
</dbReference>
<dbReference type="InterPro" id="IPR036038">
    <property type="entry name" value="Aminotransferase-like"/>
</dbReference>
<dbReference type="InterPro" id="IPR043132">
    <property type="entry name" value="BCAT-like_C"/>
</dbReference>
<dbReference type="InterPro" id="IPR043131">
    <property type="entry name" value="BCAT-like_N"/>
</dbReference>
<dbReference type="InterPro" id="IPR050571">
    <property type="entry name" value="Class-IV_PLP-Dep_Aminotrnsfr"/>
</dbReference>
<dbReference type="InterPro" id="IPR005784">
    <property type="entry name" value="D_amino_transT"/>
</dbReference>
<dbReference type="NCBIfam" id="TIGR01121">
    <property type="entry name" value="D_amino_aminoT"/>
    <property type="match status" value="1"/>
</dbReference>
<dbReference type="PANTHER" id="PTHR42743">
    <property type="entry name" value="AMINO-ACID AMINOTRANSFERASE"/>
    <property type="match status" value="1"/>
</dbReference>
<dbReference type="PANTHER" id="PTHR42743:SF10">
    <property type="entry name" value="D-ALANINE AMINOTRANSFERASE"/>
    <property type="match status" value="1"/>
</dbReference>
<dbReference type="Pfam" id="PF01063">
    <property type="entry name" value="Aminotran_4"/>
    <property type="match status" value="1"/>
</dbReference>
<dbReference type="SUPFAM" id="SSF56752">
    <property type="entry name" value="D-aminoacid aminotransferase-like PLP-dependent enzymes"/>
    <property type="match status" value="1"/>
</dbReference>
<accession>P0DJL9</accession>
<accession>O85046</accession>
<protein>
    <recommendedName>
        <fullName>D-alanine aminotransferase</fullName>
        <ecNumber>2.6.1.21</ecNumber>
    </recommendedName>
    <alternativeName>
        <fullName>D-amino acid aminotransferase</fullName>
    </alternativeName>
    <alternativeName>
        <fullName>D-amino acid transaminase</fullName>
        <shortName>DAAT</shortName>
    </alternativeName>
    <alternativeName>
        <fullName>D-aspartate aminotransferase</fullName>
    </alternativeName>
</protein>
<comment type="function">
    <text evidence="1">Acts on the D-isomers of alanine, leucine, aspartate, glutamate, aminobutyrate, norvaline and asparagine. The enzyme transfers an amino group from a substrate D-amino acid to the pyridoxal phosphate cofactor to form pyridoxamine and an alpha-keto acid in the first half-reaction. The second half-reaction is the reverse of the first, transferring the amino group from the pyridoxamine to a second alpha-keto acid to form the product D-amino acid via a ping-pong mechanism. This is an important process in the formation of D-alanine and D-glutamate, which are essential bacterial cell wall components (By similarity).</text>
</comment>
<comment type="catalytic activity">
    <reaction>
        <text>D-alanine + 2-oxoglutarate = D-glutamate + pyruvate</text>
        <dbReference type="Rhea" id="RHEA:15869"/>
        <dbReference type="ChEBI" id="CHEBI:15361"/>
        <dbReference type="ChEBI" id="CHEBI:16810"/>
        <dbReference type="ChEBI" id="CHEBI:29986"/>
        <dbReference type="ChEBI" id="CHEBI:57416"/>
        <dbReference type="EC" id="2.6.1.21"/>
    </reaction>
</comment>
<comment type="cofactor">
    <cofactor evidence="1">
        <name>pyridoxal 5'-phosphate</name>
        <dbReference type="ChEBI" id="CHEBI:597326"/>
    </cofactor>
</comment>
<comment type="subunit">
    <text evidence="1">Homodimer.</text>
</comment>
<comment type="similarity">
    <text evidence="3">Belongs to the class-IV pyridoxal-phosphate-dependent aminotransferase family.</text>
</comment>
<reference key="1">
    <citation type="journal article" date="2001" name="Science">
        <title>Comparative genomics of Listeria species.</title>
        <authorList>
            <person name="Glaser P."/>
            <person name="Frangeul L."/>
            <person name="Buchrieser C."/>
            <person name="Rusniok C."/>
            <person name="Amend A."/>
            <person name="Baquero F."/>
            <person name="Berche P."/>
            <person name="Bloecker H."/>
            <person name="Brandt P."/>
            <person name="Chakraborty T."/>
            <person name="Charbit A."/>
            <person name="Chetouani F."/>
            <person name="Couve E."/>
            <person name="de Daruvar A."/>
            <person name="Dehoux P."/>
            <person name="Domann E."/>
            <person name="Dominguez-Bernal G."/>
            <person name="Duchaud E."/>
            <person name="Durant L."/>
            <person name="Dussurget O."/>
            <person name="Entian K.-D."/>
            <person name="Fsihi H."/>
            <person name="Garcia-del Portillo F."/>
            <person name="Garrido P."/>
            <person name="Gautier L."/>
            <person name="Goebel W."/>
            <person name="Gomez-Lopez N."/>
            <person name="Hain T."/>
            <person name="Hauf J."/>
            <person name="Jackson D."/>
            <person name="Jones L.-M."/>
            <person name="Kaerst U."/>
            <person name="Kreft J."/>
            <person name="Kuhn M."/>
            <person name="Kunst F."/>
            <person name="Kurapkat G."/>
            <person name="Madueno E."/>
            <person name="Maitournam A."/>
            <person name="Mata Vicente J."/>
            <person name="Ng E."/>
            <person name="Nedjari H."/>
            <person name="Nordsiek G."/>
            <person name="Novella S."/>
            <person name="de Pablos B."/>
            <person name="Perez-Diaz J.-C."/>
            <person name="Purcell R."/>
            <person name="Remmel B."/>
            <person name="Rose M."/>
            <person name="Schlueter T."/>
            <person name="Simoes N."/>
            <person name="Tierrez A."/>
            <person name="Vazquez-Boland J.-A."/>
            <person name="Voss H."/>
            <person name="Wehland J."/>
            <person name="Cossart P."/>
        </authorList>
    </citation>
    <scope>NUCLEOTIDE SEQUENCE [LARGE SCALE GENOMIC DNA]</scope>
    <source>
        <strain>ATCC BAA-679 / EGD-e</strain>
    </source>
</reference>
<proteinExistence type="inferred from homology"/>